<organism>
    <name type="scientific">Lactiplantibacillus plantarum (strain ATCC BAA-793 / NCIMB 8826 / WCFS1)</name>
    <name type="common">Lactobacillus plantarum</name>
    <dbReference type="NCBI Taxonomy" id="220668"/>
    <lineage>
        <taxon>Bacteria</taxon>
        <taxon>Bacillati</taxon>
        <taxon>Bacillota</taxon>
        <taxon>Bacilli</taxon>
        <taxon>Lactobacillales</taxon>
        <taxon>Lactobacillaceae</taxon>
        <taxon>Lactiplantibacillus</taxon>
    </lineage>
</organism>
<proteinExistence type="inferred from homology"/>
<reference key="1">
    <citation type="journal article" date="2003" name="Proc. Natl. Acad. Sci. U.S.A.">
        <title>Complete genome sequence of Lactobacillus plantarum WCFS1.</title>
        <authorList>
            <person name="Kleerebezem M."/>
            <person name="Boekhorst J."/>
            <person name="van Kranenburg R."/>
            <person name="Molenaar D."/>
            <person name="Kuipers O.P."/>
            <person name="Leer R."/>
            <person name="Tarchini R."/>
            <person name="Peters S.A."/>
            <person name="Sandbrink H.M."/>
            <person name="Fiers M.W.E.J."/>
            <person name="Stiekema W."/>
            <person name="Klein Lankhorst R.M."/>
            <person name="Bron P.A."/>
            <person name="Hoffer S.M."/>
            <person name="Nierop Groot M.N."/>
            <person name="Kerkhoven R."/>
            <person name="De Vries M."/>
            <person name="Ursing B."/>
            <person name="De Vos W.M."/>
            <person name="Siezen R.J."/>
        </authorList>
    </citation>
    <scope>NUCLEOTIDE SEQUENCE [LARGE SCALE GENOMIC DNA]</scope>
    <source>
        <strain>ATCC BAA-793 / NCIMB 8826 / WCFS1</strain>
    </source>
</reference>
<reference key="2">
    <citation type="journal article" date="2012" name="J. Bacteriol.">
        <title>Complete resequencing and reannotation of the Lactobacillus plantarum WCFS1 genome.</title>
        <authorList>
            <person name="Siezen R.J."/>
            <person name="Francke C."/>
            <person name="Renckens B."/>
            <person name="Boekhorst J."/>
            <person name="Wels M."/>
            <person name="Kleerebezem M."/>
            <person name="van Hijum S.A."/>
        </authorList>
    </citation>
    <scope>NUCLEOTIDE SEQUENCE [LARGE SCALE GENOMIC DNA]</scope>
    <scope>GENOME REANNOTATION</scope>
    <source>
        <strain>ATCC BAA-793 / NCIMB 8826 / WCFS1</strain>
    </source>
</reference>
<gene>
    <name evidence="1" type="primary">murA1</name>
    <name type="ordered locus">lp_2361</name>
</gene>
<name>MURA1_LACPL</name>
<protein>
    <recommendedName>
        <fullName evidence="1">UDP-N-acetylglucosamine 1-carboxyvinyltransferase 1</fullName>
        <ecNumber evidence="1">2.5.1.7</ecNumber>
    </recommendedName>
    <alternativeName>
        <fullName evidence="1">Enoylpyruvate transferase 1</fullName>
    </alternativeName>
    <alternativeName>
        <fullName evidence="1">UDP-N-acetylglucosamine enolpyruvyl transferase 1</fullName>
        <shortName evidence="1">EPT 1</shortName>
    </alternativeName>
</protein>
<dbReference type="EC" id="2.5.1.7" evidence="1"/>
<dbReference type="EMBL" id="AL935263">
    <property type="protein sequence ID" value="CCC79550.1"/>
    <property type="molecule type" value="Genomic_DNA"/>
</dbReference>
<dbReference type="RefSeq" id="YP_004890064.1">
    <property type="nucleotide sequence ID" value="NC_004567.2"/>
</dbReference>
<dbReference type="SMR" id="Q88UU5"/>
<dbReference type="STRING" id="220668.lp_2361"/>
<dbReference type="EnsemblBacteria" id="CCC79550">
    <property type="protein sequence ID" value="CCC79550"/>
    <property type="gene ID" value="lp_2361"/>
</dbReference>
<dbReference type="KEGG" id="lpl:lp_2361"/>
<dbReference type="PATRIC" id="fig|220668.9.peg.1995"/>
<dbReference type="eggNOG" id="COG0766">
    <property type="taxonomic scope" value="Bacteria"/>
</dbReference>
<dbReference type="HOGENOM" id="CLU_027387_0_0_9"/>
<dbReference type="OrthoDB" id="9803760at2"/>
<dbReference type="PhylomeDB" id="Q88UU5"/>
<dbReference type="UniPathway" id="UPA00219"/>
<dbReference type="Proteomes" id="UP000000432">
    <property type="component" value="Chromosome"/>
</dbReference>
<dbReference type="GO" id="GO:0005737">
    <property type="term" value="C:cytoplasm"/>
    <property type="evidence" value="ECO:0007669"/>
    <property type="project" value="UniProtKB-SubCell"/>
</dbReference>
<dbReference type="GO" id="GO:0008760">
    <property type="term" value="F:UDP-N-acetylglucosamine 1-carboxyvinyltransferase activity"/>
    <property type="evidence" value="ECO:0007669"/>
    <property type="project" value="UniProtKB-UniRule"/>
</dbReference>
<dbReference type="GO" id="GO:0051301">
    <property type="term" value="P:cell division"/>
    <property type="evidence" value="ECO:0007669"/>
    <property type="project" value="UniProtKB-KW"/>
</dbReference>
<dbReference type="GO" id="GO:0071555">
    <property type="term" value="P:cell wall organization"/>
    <property type="evidence" value="ECO:0007669"/>
    <property type="project" value="UniProtKB-KW"/>
</dbReference>
<dbReference type="GO" id="GO:0009252">
    <property type="term" value="P:peptidoglycan biosynthetic process"/>
    <property type="evidence" value="ECO:0007669"/>
    <property type="project" value="UniProtKB-UniRule"/>
</dbReference>
<dbReference type="GO" id="GO:0008360">
    <property type="term" value="P:regulation of cell shape"/>
    <property type="evidence" value="ECO:0007669"/>
    <property type="project" value="UniProtKB-KW"/>
</dbReference>
<dbReference type="GO" id="GO:0019277">
    <property type="term" value="P:UDP-N-acetylgalactosamine biosynthetic process"/>
    <property type="evidence" value="ECO:0007669"/>
    <property type="project" value="InterPro"/>
</dbReference>
<dbReference type="CDD" id="cd01555">
    <property type="entry name" value="UdpNAET"/>
    <property type="match status" value="1"/>
</dbReference>
<dbReference type="FunFam" id="3.65.10.10:FF:000001">
    <property type="entry name" value="UDP-N-acetylglucosamine 1-carboxyvinyltransferase"/>
    <property type="match status" value="1"/>
</dbReference>
<dbReference type="Gene3D" id="3.65.10.10">
    <property type="entry name" value="Enolpyruvate transferase domain"/>
    <property type="match status" value="2"/>
</dbReference>
<dbReference type="HAMAP" id="MF_00111">
    <property type="entry name" value="MurA"/>
    <property type="match status" value="1"/>
</dbReference>
<dbReference type="InterPro" id="IPR001986">
    <property type="entry name" value="Enolpyruvate_Tfrase_dom"/>
</dbReference>
<dbReference type="InterPro" id="IPR036968">
    <property type="entry name" value="Enolpyruvate_Tfrase_sf"/>
</dbReference>
<dbReference type="InterPro" id="IPR050068">
    <property type="entry name" value="MurA_subfamily"/>
</dbReference>
<dbReference type="InterPro" id="IPR013792">
    <property type="entry name" value="RNA3'P_cycl/enolpyr_Trfase_a/b"/>
</dbReference>
<dbReference type="InterPro" id="IPR005750">
    <property type="entry name" value="UDP_GlcNAc_COvinyl_MurA"/>
</dbReference>
<dbReference type="NCBIfam" id="TIGR01072">
    <property type="entry name" value="murA"/>
    <property type="match status" value="1"/>
</dbReference>
<dbReference type="NCBIfam" id="NF006873">
    <property type="entry name" value="PRK09369.1"/>
    <property type="match status" value="1"/>
</dbReference>
<dbReference type="PANTHER" id="PTHR43783">
    <property type="entry name" value="UDP-N-ACETYLGLUCOSAMINE 1-CARBOXYVINYLTRANSFERASE"/>
    <property type="match status" value="1"/>
</dbReference>
<dbReference type="PANTHER" id="PTHR43783:SF1">
    <property type="entry name" value="UDP-N-ACETYLGLUCOSAMINE 1-CARBOXYVINYLTRANSFERASE"/>
    <property type="match status" value="1"/>
</dbReference>
<dbReference type="Pfam" id="PF00275">
    <property type="entry name" value="EPSP_synthase"/>
    <property type="match status" value="1"/>
</dbReference>
<dbReference type="SUPFAM" id="SSF55205">
    <property type="entry name" value="EPT/RTPC-like"/>
    <property type="match status" value="1"/>
</dbReference>
<sequence>MEEIVVHGGQRLTGNVHIEGAKNAVLPILAASLLASSGQTHLSNVPVLSDVFTMNNVLKFLNTKIDFDEINKTIDIDASRQLSSEAPFQYVSKMRASIVVMGPLLARLGHAKVAMPGGCAIGSRPIDLHLKGLNALGAEIERHDGYVEATANQLHGAAIYLDFPSVGATQNIMMAATLADGITTMENVAREPEIVDLANYLNQMGAKVTGAGTETIRIEGVKAMHGCDHSIVQDRIEAGTFMVAAAVTQGNVLVEDAIAEHNKPLISKMREMGVTVTEEPAGIRVIGPEILKPTSVKTMPHPGFPTDMQPQMTILQLCAQGTSLLTETVFENRFMHLDELRRMNADFKVEGRSVIMYGPTDFNGAQVTATDLRAAAALVIAGLVSRGYTEVTNLKYLDRGYFNFHGKLAKLGAEIKRVDVPDGTVYALNPDFANEAAE</sequence>
<comment type="function">
    <text evidence="1">Cell wall formation. Adds enolpyruvyl to UDP-N-acetylglucosamine.</text>
</comment>
<comment type="catalytic activity">
    <reaction evidence="1">
        <text>phosphoenolpyruvate + UDP-N-acetyl-alpha-D-glucosamine = UDP-N-acetyl-3-O-(1-carboxyvinyl)-alpha-D-glucosamine + phosphate</text>
        <dbReference type="Rhea" id="RHEA:18681"/>
        <dbReference type="ChEBI" id="CHEBI:43474"/>
        <dbReference type="ChEBI" id="CHEBI:57705"/>
        <dbReference type="ChEBI" id="CHEBI:58702"/>
        <dbReference type="ChEBI" id="CHEBI:68483"/>
        <dbReference type="EC" id="2.5.1.7"/>
    </reaction>
</comment>
<comment type="pathway">
    <text evidence="1">Cell wall biogenesis; peptidoglycan biosynthesis.</text>
</comment>
<comment type="subcellular location">
    <subcellularLocation>
        <location evidence="1">Cytoplasm</location>
    </subcellularLocation>
</comment>
<comment type="similarity">
    <text evidence="1">Belongs to the EPSP synthase family. MurA subfamily.</text>
</comment>
<accession>Q88UU5</accession>
<accession>F9UQR1</accession>
<feature type="chain" id="PRO_0000178881" description="UDP-N-acetylglucosamine 1-carboxyvinyltransferase 1">
    <location>
        <begin position="1"/>
        <end position="438"/>
    </location>
</feature>
<feature type="active site" description="Proton donor" evidence="1">
    <location>
        <position position="119"/>
    </location>
</feature>
<feature type="binding site" evidence="1">
    <location>
        <begin position="22"/>
        <end position="23"/>
    </location>
    <ligand>
        <name>phosphoenolpyruvate</name>
        <dbReference type="ChEBI" id="CHEBI:58702"/>
    </ligand>
</feature>
<feature type="binding site" evidence="1">
    <location>
        <position position="95"/>
    </location>
    <ligand>
        <name>UDP-N-acetyl-alpha-D-glucosamine</name>
        <dbReference type="ChEBI" id="CHEBI:57705"/>
    </ligand>
</feature>
<feature type="binding site" evidence="1">
    <location>
        <begin position="124"/>
        <end position="128"/>
    </location>
    <ligand>
        <name>UDP-N-acetyl-alpha-D-glucosamine</name>
        <dbReference type="ChEBI" id="CHEBI:57705"/>
    </ligand>
</feature>
<feature type="binding site" evidence="1">
    <location>
        <position position="307"/>
    </location>
    <ligand>
        <name>UDP-N-acetyl-alpha-D-glucosamine</name>
        <dbReference type="ChEBI" id="CHEBI:57705"/>
    </ligand>
</feature>
<feature type="binding site" evidence="1">
    <location>
        <position position="329"/>
    </location>
    <ligand>
        <name>UDP-N-acetyl-alpha-D-glucosamine</name>
        <dbReference type="ChEBI" id="CHEBI:57705"/>
    </ligand>
</feature>
<feature type="modified residue" description="2-(S-cysteinyl)pyruvic acid O-phosphothioketal" evidence="1">
    <location>
        <position position="119"/>
    </location>
</feature>
<evidence type="ECO:0000255" key="1">
    <source>
        <dbReference type="HAMAP-Rule" id="MF_00111"/>
    </source>
</evidence>
<keyword id="KW-0131">Cell cycle</keyword>
<keyword id="KW-0132">Cell division</keyword>
<keyword id="KW-0133">Cell shape</keyword>
<keyword id="KW-0961">Cell wall biogenesis/degradation</keyword>
<keyword id="KW-0963">Cytoplasm</keyword>
<keyword id="KW-0573">Peptidoglycan synthesis</keyword>
<keyword id="KW-0670">Pyruvate</keyword>
<keyword id="KW-1185">Reference proteome</keyword>
<keyword id="KW-0808">Transferase</keyword>